<organism>
    <name type="scientific">Bacillus thuringiensis (strain Al Hakam)</name>
    <dbReference type="NCBI Taxonomy" id="412694"/>
    <lineage>
        <taxon>Bacteria</taxon>
        <taxon>Bacillati</taxon>
        <taxon>Bacillota</taxon>
        <taxon>Bacilli</taxon>
        <taxon>Bacillales</taxon>
        <taxon>Bacillaceae</taxon>
        <taxon>Bacillus</taxon>
        <taxon>Bacillus cereus group</taxon>
    </lineage>
</organism>
<comment type="function">
    <text evidence="1">The glycine cleavage system catalyzes the degradation of glycine. The P protein binds the alpha-amino group of glycine through its pyridoxal phosphate cofactor; CO(2) is released and the remaining methylamine moiety is then transferred to the lipoamide cofactor of the H protein.</text>
</comment>
<comment type="catalytic activity">
    <reaction evidence="1">
        <text>N(6)-[(R)-lipoyl]-L-lysyl-[glycine-cleavage complex H protein] + glycine + H(+) = N(6)-[(R)-S(8)-aminomethyldihydrolipoyl]-L-lysyl-[glycine-cleavage complex H protein] + CO2</text>
        <dbReference type="Rhea" id="RHEA:24304"/>
        <dbReference type="Rhea" id="RHEA-COMP:10494"/>
        <dbReference type="Rhea" id="RHEA-COMP:10495"/>
        <dbReference type="ChEBI" id="CHEBI:15378"/>
        <dbReference type="ChEBI" id="CHEBI:16526"/>
        <dbReference type="ChEBI" id="CHEBI:57305"/>
        <dbReference type="ChEBI" id="CHEBI:83099"/>
        <dbReference type="ChEBI" id="CHEBI:83143"/>
        <dbReference type="EC" id="1.4.4.2"/>
    </reaction>
</comment>
<comment type="subunit">
    <text evidence="1">The glycine cleavage system is composed of four proteins: P, T, L and H. In this organism, the P 'protein' is a heterodimer of two subunits.</text>
</comment>
<comment type="similarity">
    <text evidence="1">Belongs to the GcvP family. N-terminal subunit subfamily.</text>
</comment>
<evidence type="ECO:0000255" key="1">
    <source>
        <dbReference type="HAMAP-Rule" id="MF_00712"/>
    </source>
</evidence>
<feature type="chain" id="PRO_1000045638" description="Probable glycine dehydrogenase (decarboxylating) subunit 1">
    <location>
        <begin position="1"/>
        <end position="447"/>
    </location>
</feature>
<dbReference type="EC" id="1.4.4.2" evidence="1"/>
<dbReference type="EMBL" id="CP000485">
    <property type="protein sequence ID" value="ABK87053.1"/>
    <property type="molecule type" value="Genomic_DNA"/>
</dbReference>
<dbReference type="RefSeq" id="WP_000903231.1">
    <property type="nucleotide sequence ID" value="NC_008600.1"/>
</dbReference>
<dbReference type="SMR" id="A0RIL0"/>
<dbReference type="GeneID" id="93006874"/>
<dbReference type="KEGG" id="btl:BALH_3828"/>
<dbReference type="HOGENOM" id="CLU_004620_0_2_9"/>
<dbReference type="GO" id="GO:0004375">
    <property type="term" value="F:glycine dehydrogenase (decarboxylating) activity"/>
    <property type="evidence" value="ECO:0007669"/>
    <property type="project" value="UniProtKB-EC"/>
</dbReference>
<dbReference type="GO" id="GO:0019464">
    <property type="term" value="P:glycine decarboxylation via glycine cleavage system"/>
    <property type="evidence" value="ECO:0007669"/>
    <property type="project" value="UniProtKB-UniRule"/>
</dbReference>
<dbReference type="GO" id="GO:0009116">
    <property type="term" value="P:nucleoside metabolic process"/>
    <property type="evidence" value="ECO:0007669"/>
    <property type="project" value="InterPro"/>
</dbReference>
<dbReference type="CDD" id="cd00613">
    <property type="entry name" value="GDC-P"/>
    <property type="match status" value="1"/>
</dbReference>
<dbReference type="FunFam" id="3.40.640.10:FF:000113">
    <property type="entry name" value="Probable glycine dehydrogenase (decarboxylating) subunit 1"/>
    <property type="match status" value="1"/>
</dbReference>
<dbReference type="Gene3D" id="3.90.1150.10">
    <property type="entry name" value="Aspartate Aminotransferase, domain 1"/>
    <property type="match status" value="1"/>
</dbReference>
<dbReference type="Gene3D" id="3.40.640.10">
    <property type="entry name" value="Type I PLP-dependent aspartate aminotransferase-like (Major domain)"/>
    <property type="match status" value="1"/>
</dbReference>
<dbReference type="HAMAP" id="MF_00712">
    <property type="entry name" value="GcvPA"/>
    <property type="match status" value="1"/>
</dbReference>
<dbReference type="InterPro" id="IPR023010">
    <property type="entry name" value="GcvPA"/>
</dbReference>
<dbReference type="InterPro" id="IPR049315">
    <property type="entry name" value="GDC-P_N"/>
</dbReference>
<dbReference type="InterPro" id="IPR020581">
    <property type="entry name" value="GDC_P"/>
</dbReference>
<dbReference type="InterPro" id="IPR015424">
    <property type="entry name" value="PyrdxlP-dep_Trfase"/>
</dbReference>
<dbReference type="InterPro" id="IPR015421">
    <property type="entry name" value="PyrdxlP-dep_Trfase_major"/>
</dbReference>
<dbReference type="InterPro" id="IPR015422">
    <property type="entry name" value="PyrdxlP-dep_Trfase_small"/>
</dbReference>
<dbReference type="NCBIfam" id="NF001696">
    <property type="entry name" value="PRK00451.1"/>
    <property type="match status" value="1"/>
</dbReference>
<dbReference type="PANTHER" id="PTHR42806">
    <property type="entry name" value="GLYCINE CLEAVAGE SYSTEM P-PROTEIN"/>
    <property type="match status" value="1"/>
</dbReference>
<dbReference type="PANTHER" id="PTHR42806:SF1">
    <property type="entry name" value="GLYCINE DEHYDROGENASE (DECARBOXYLATING)"/>
    <property type="match status" value="1"/>
</dbReference>
<dbReference type="Pfam" id="PF02347">
    <property type="entry name" value="GDC-P"/>
    <property type="match status" value="1"/>
</dbReference>
<dbReference type="PIRSF" id="PIRSF006815">
    <property type="entry name" value="GcvPA"/>
    <property type="match status" value="1"/>
</dbReference>
<dbReference type="SUPFAM" id="SSF53383">
    <property type="entry name" value="PLP-dependent transferases"/>
    <property type="match status" value="1"/>
</dbReference>
<proteinExistence type="inferred from homology"/>
<reference key="1">
    <citation type="journal article" date="2007" name="J. Bacteriol.">
        <title>The complete genome sequence of Bacillus thuringiensis Al Hakam.</title>
        <authorList>
            <person name="Challacombe J.F."/>
            <person name="Altherr M.R."/>
            <person name="Xie G."/>
            <person name="Bhotika S.S."/>
            <person name="Brown N."/>
            <person name="Bruce D."/>
            <person name="Campbell C.S."/>
            <person name="Campbell M.L."/>
            <person name="Chen J."/>
            <person name="Chertkov O."/>
            <person name="Cleland C."/>
            <person name="Dimitrijevic M."/>
            <person name="Doggett N.A."/>
            <person name="Fawcett J.J."/>
            <person name="Glavina T."/>
            <person name="Goodwin L.A."/>
            <person name="Green L.D."/>
            <person name="Han C.S."/>
            <person name="Hill K.K."/>
            <person name="Hitchcock P."/>
            <person name="Jackson P.J."/>
            <person name="Keim P."/>
            <person name="Kewalramani A.R."/>
            <person name="Longmire J."/>
            <person name="Lucas S."/>
            <person name="Malfatti S."/>
            <person name="Martinez D."/>
            <person name="McMurry K."/>
            <person name="Meincke L.J."/>
            <person name="Misra M."/>
            <person name="Moseman B.L."/>
            <person name="Mundt M."/>
            <person name="Munk A.C."/>
            <person name="Okinaka R.T."/>
            <person name="Parson-Quintana B."/>
            <person name="Reilly L.P."/>
            <person name="Richardson P."/>
            <person name="Robinson D.L."/>
            <person name="Saunders E."/>
            <person name="Tapia R."/>
            <person name="Tesmer J.G."/>
            <person name="Thayer N."/>
            <person name="Thompson L.S."/>
            <person name="Tice H."/>
            <person name="Ticknor L.O."/>
            <person name="Wills P.L."/>
            <person name="Gilna P."/>
            <person name="Brettin T.S."/>
        </authorList>
    </citation>
    <scope>NUCLEOTIDE SEQUENCE [LARGE SCALE GENOMIC DNA]</scope>
    <source>
        <strain>Al Hakam</strain>
    </source>
</reference>
<keyword id="KW-0560">Oxidoreductase</keyword>
<accession>A0RIL0</accession>
<sequence length="447" mass="49421">MLHRYLPMTEEDKKEMLQTIGVQTIDELFSDIPESVRFKGDLKIKEAKSEPELLKELSQMASKNANLKEYASFLGAGVYDHYAPVIVDHVISRSEFYTAYTPYQPEISQGELQAIFEFQTMICELTGMDVANSSMYDGGTALAEAAMLAAGHTRKKKILVSSAVHPESRAVLETYAKGQHLEVVEINHKDGVTDLDVLQSEVDDTVACVIVQYPNFFGQVEKLADIEKIVHQQKSLFIVSSNPLSLGALTPPGKFGADIVIGDAQPFGIPTQFGGPHCGYFATTKAFMRKIPGRLVGQTVDSDGKRGFVLTLQAREQHIRRDKATSNICSNQALNALAASVAMTALGKQGVKEMARQNISKAQYAKRQFEAKGFTVTFAGPFFNEFVVDCKRPVKEVNDALLQKNIIGGYDLGRDYKEHENHMLVAVTELRTKEEIDTLVNEMGAIQ</sequence>
<gene>
    <name evidence="1" type="primary">gcvPA</name>
    <name type="ordered locus">BALH_3828</name>
</gene>
<name>GCSPA_BACAH</name>
<protein>
    <recommendedName>
        <fullName evidence="1">Probable glycine dehydrogenase (decarboxylating) subunit 1</fullName>
        <ecNumber evidence="1">1.4.4.2</ecNumber>
    </recommendedName>
    <alternativeName>
        <fullName evidence="1">Glycine cleavage system P-protein subunit 1</fullName>
    </alternativeName>
    <alternativeName>
        <fullName evidence="1">Glycine decarboxylase subunit 1</fullName>
    </alternativeName>
    <alternativeName>
        <fullName evidence="1">Glycine dehydrogenase (aminomethyl-transferring) subunit 1</fullName>
    </alternativeName>
</protein>